<protein>
    <recommendedName>
        <fullName>Phospholipase A2 OS2</fullName>
        <shortName>PLA2</shortName>
        <ecNumber>3.1.1.4</ecNumber>
    </recommendedName>
    <alternativeName>
        <fullName>Phosphatidylcholine 2-acylhydrolase</fullName>
    </alternativeName>
</protein>
<evidence type="ECO:0000250" key="1"/>
<evidence type="ECO:0000255" key="2"/>
<evidence type="ECO:0000255" key="3">
    <source>
        <dbReference type="PROSITE-ProRule" id="PRU10035"/>
    </source>
</evidence>
<evidence type="ECO:0000255" key="4">
    <source>
        <dbReference type="PROSITE-ProRule" id="PRU10036"/>
    </source>
</evidence>
<evidence type="ECO:0000269" key="5">
    <source>
    </source>
</evidence>
<evidence type="ECO:0000269" key="6">
    <source>
    </source>
</evidence>
<evidence type="ECO:0000269" key="7">
    <source>
    </source>
</evidence>
<evidence type="ECO:0000269" key="8">
    <source>
    </source>
</evidence>
<evidence type="ECO:0000269" key="9">
    <source>
    </source>
</evidence>
<evidence type="ECO:0000269" key="10">
    <source>
    </source>
</evidence>
<evidence type="ECO:0000305" key="11"/>
<proteinExistence type="evidence at protein level"/>
<keyword id="KW-0106">Calcium</keyword>
<keyword id="KW-0903">Direct protein sequencing</keyword>
<keyword id="KW-1015">Disulfide bond</keyword>
<keyword id="KW-0378">Hydrolase</keyword>
<keyword id="KW-0442">Lipid degradation</keyword>
<keyword id="KW-0443">Lipid metabolism</keyword>
<keyword id="KW-0479">Metal-binding</keyword>
<keyword id="KW-0959">Myotoxin</keyword>
<keyword id="KW-0528">Neurotoxin</keyword>
<keyword id="KW-0638">Presynaptic neurotoxin</keyword>
<keyword id="KW-0964">Secreted</keyword>
<keyword id="KW-0732">Signal</keyword>
<keyword id="KW-0800">Toxin</keyword>
<sequence length="146" mass="16104">MHPAHLLVLLAVCVSLLGASDIPPLPLNLAQFGFMIRCANGGSRSPLDYTDYGCYCGKGGRGTPVDDLDRCCQVHDECYGEAEKRLGCSPFVTLYSWKCYGKAPSCNTKTDCQRFVCNCDAKAAECFARSPYQKKNWNINTKARCK</sequence>
<name>PA22_OXYSC</name>
<accession>Q45Z47</accession>
<dbReference type="EC" id="3.1.1.4"/>
<dbReference type="EMBL" id="DQ085819">
    <property type="protein sequence ID" value="AAZ22637.1"/>
    <property type="molecule type" value="mRNA"/>
</dbReference>
<dbReference type="SMR" id="Q45Z47"/>
<dbReference type="GO" id="GO:0005576">
    <property type="term" value="C:extracellular region"/>
    <property type="evidence" value="ECO:0007669"/>
    <property type="project" value="UniProtKB-SubCell"/>
</dbReference>
<dbReference type="GO" id="GO:0005509">
    <property type="term" value="F:calcium ion binding"/>
    <property type="evidence" value="ECO:0007669"/>
    <property type="project" value="InterPro"/>
</dbReference>
<dbReference type="GO" id="GO:0047498">
    <property type="term" value="F:calcium-dependent phospholipase A2 activity"/>
    <property type="evidence" value="ECO:0007669"/>
    <property type="project" value="TreeGrafter"/>
</dbReference>
<dbReference type="GO" id="GO:0005543">
    <property type="term" value="F:phospholipid binding"/>
    <property type="evidence" value="ECO:0007669"/>
    <property type="project" value="TreeGrafter"/>
</dbReference>
<dbReference type="GO" id="GO:0090729">
    <property type="term" value="F:toxin activity"/>
    <property type="evidence" value="ECO:0007669"/>
    <property type="project" value="UniProtKB-KW"/>
</dbReference>
<dbReference type="GO" id="GO:0050482">
    <property type="term" value="P:arachidonate secretion"/>
    <property type="evidence" value="ECO:0007669"/>
    <property type="project" value="InterPro"/>
</dbReference>
<dbReference type="GO" id="GO:0016042">
    <property type="term" value="P:lipid catabolic process"/>
    <property type="evidence" value="ECO:0007669"/>
    <property type="project" value="UniProtKB-KW"/>
</dbReference>
<dbReference type="GO" id="GO:0006644">
    <property type="term" value="P:phospholipid metabolic process"/>
    <property type="evidence" value="ECO:0007669"/>
    <property type="project" value="InterPro"/>
</dbReference>
<dbReference type="CDD" id="cd00125">
    <property type="entry name" value="PLA2c"/>
    <property type="match status" value="1"/>
</dbReference>
<dbReference type="FunFam" id="1.20.90.10:FF:000007">
    <property type="entry name" value="Acidic phospholipase A2"/>
    <property type="match status" value="1"/>
</dbReference>
<dbReference type="Gene3D" id="1.20.90.10">
    <property type="entry name" value="Phospholipase A2 domain"/>
    <property type="match status" value="1"/>
</dbReference>
<dbReference type="InterPro" id="IPR001211">
    <property type="entry name" value="PLipase_A2"/>
</dbReference>
<dbReference type="InterPro" id="IPR033112">
    <property type="entry name" value="PLipase_A2_Asp_AS"/>
</dbReference>
<dbReference type="InterPro" id="IPR016090">
    <property type="entry name" value="PLipase_A2_dom"/>
</dbReference>
<dbReference type="InterPro" id="IPR036444">
    <property type="entry name" value="PLipase_A2_dom_sf"/>
</dbReference>
<dbReference type="InterPro" id="IPR033113">
    <property type="entry name" value="PLipase_A2_His_AS"/>
</dbReference>
<dbReference type="PANTHER" id="PTHR11716:SF106">
    <property type="entry name" value="PHOSPHOLIPASE A2 A2-ACTITOXIN-UCS2A-LIKE"/>
    <property type="match status" value="1"/>
</dbReference>
<dbReference type="PANTHER" id="PTHR11716">
    <property type="entry name" value="PHOSPHOLIPASE A2 FAMILY MEMBER"/>
    <property type="match status" value="1"/>
</dbReference>
<dbReference type="Pfam" id="PF00068">
    <property type="entry name" value="Phospholip_A2_1"/>
    <property type="match status" value="1"/>
</dbReference>
<dbReference type="PRINTS" id="PR00389">
    <property type="entry name" value="PHPHLIPASEA2"/>
</dbReference>
<dbReference type="SMART" id="SM00085">
    <property type="entry name" value="PA2c"/>
    <property type="match status" value="1"/>
</dbReference>
<dbReference type="SUPFAM" id="SSF48619">
    <property type="entry name" value="Phospholipase A2, PLA2"/>
    <property type="match status" value="1"/>
</dbReference>
<dbReference type="PROSITE" id="PS00119">
    <property type="entry name" value="PA2_ASP"/>
    <property type="match status" value="1"/>
</dbReference>
<dbReference type="PROSITE" id="PS00118">
    <property type="entry name" value="PA2_HIS"/>
    <property type="match status" value="1"/>
</dbReference>
<reference key="1">
    <citation type="journal article" date="2005" name="Cell. Mol. Life Sci.">
        <title>Identification and analysis of venom gland-specific genes from the coastal taipan (Oxyuranus scutellatus) and related species.</title>
        <authorList>
            <person name="St Pierre L."/>
            <person name="Woods R."/>
            <person name="Earl S.T.H."/>
            <person name="Masci P.P."/>
            <person name="Lavin M.F."/>
        </authorList>
    </citation>
    <scope>NUCLEOTIDE SEQUENCE [MRNA]</scope>
    <source>
        <tissue>Venom gland</tissue>
    </source>
</reference>
<reference key="2">
    <citation type="journal article" date="1995" name="J. Biol. Chem.">
        <title>Structural elements of secretory phospholipases A2 involved in the binding to M-type receptors.</title>
        <authorList>
            <person name="Lambeau G."/>
            <person name="Ancian P."/>
            <person name="Nicolas J.P."/>
            <person name="Beiboer S.H."/>
            <person name="Moinier D."/>
            <person name="Verheij H."/>
            <person name="Lazdunski M."/>
        </authorList>
    </citation>
    <scope>PROTEIN SEQUENCE OF 28-146</scope>
    <source>
        <tissue>Venom</tissue>
    </source>
</reference>
<reference key="3">
    <citation type="journal article" date="1989" name="J. Biol. Chem.">
        <title>Identification and properties of very high affinity brain membrane-binding sites for a neurotoxic phospholipase from the taipan venom.</title>
        <authorList>
            <person name="Lambeau G."/>
            <person name="Barhanin J."/>
            <person name="Schweitz H."/>
            <person name="Qar J."/>
            <person name="Lazdunski M."/>
        </authorList>
    </citation>
    <scope>FUNCTION</scope>
    <source>
        <tissue>Venom</tissue>
    </source>
</reference>
<reference key="4">
    <citation type="journal article" date="1990" name="J. Biol. Chem.">
        <title>Identification and purification of a very high affinity binding protein for toxic phospholipases A2 in skeletal muscle.</title>
        <authorList>
            <person name="Lambeau G."/>
            <person name="Schmid-Alliana A."/>
            <person name="Lazdunski M."/>
            <person name="Barhanin J."/>
        </authorList>
    </citation>
    <scope>FUNCTION</scope>
    <scope>SUBUNIT</scope>
    <source>
        <tissue>Venom</tissue>
    </source>
</reference>
<reference key="5">
    <citation type="journal article" date="1995" name="J. Physiol. (Lond.)">
        <title>Inhibition of ACh release at an Aplysia synapse by neurotoxic phospholipases A2: specific receptors and mechanisms of action.</title>
        <authorList>
            <person name="Fossier P."/>
            <person name="Lambeau G."/>
            <person name="Lazdunski M."/>
            <person name="Baux G."/>
        </authorList>
    </citation>
    <scope>FUNCTION</scope>
    <source>
        <tissue>Venom</tissue>
    </source>
</reference>
<reference key="6">
    <citation type="journal article" date="1999" name="Neurosci. Lett.">
        <title>Secretory phospholipase A2 potentiates glutamate-induced rat striatal neuronal cell death in vivo.</title>
        <authorList>
            <person name="Kolko M."/>
            <person name="Bruhn T."/>
            <person name="Christensen T."/>
            <person name="Lazdunski M."/>
            <person name="Lambeau G."/>
            <person name="Bazan N.G."/>
            <person name="Diemer N.H."/>
        </authorList>
    </citation>
    <scope>FUNCTION</scope>
    <scope>BIOASSAY</scope>
    <source>
        <tissue>Venom</tissue>
    </source>
</reference>
<reference key="7">
    <citation type="journal article" date="2003" name="J. Biol. Chem.">
        <title>Potentiation of tumor necrosis factor alpha-induced secreted phospholipase A2 (sPLA2)-IIA expression in mesangial cells by an autocrine loop involving sPLA2 and peroxisome proliferator-activated receptor alpha activation.</title>
        <authorList>
            <person name="Beck S."/>
            <person name="Lambeau G."/>
            <person name="Scholz-Pedretti K."/>
            <person name="Gelb M.H."/>
            <person name="Janssen M.J."/>
            <person name="Edwards S.H."/>
            <person name="Wilton D.C."/>
            <person name="Pfeilschifter J."/>
            <person name="Kaszkin M."/>
        </authorList>
    </citation>
    <scope>FUNCTION</scope>
</reference>
<reference key="8">
    <citation type="journal article" date="2006" name="Biochemistry">
        <title>Neurotoxicity and other pharmacological activities of the snake venom phospholipase A2 OS2: the N-terminal region is more important than enzymatic activity.</title>
        <authorList>
            <person name="Rouault M."/>
            <person name="Rash L.D."/>
            <person name="Escoubas P."/>
            <person name="Boilard E."/>
            <person name="Bollinger J."/>
            <person name="Lomonte B."/>
            <person name="Maurin T."/>
            <person name="Guillaume C."/>
            <person name="Canaan S."/>
            <person name="Deregnaucourt C."/>
            <person name="Schrevel J."/>
            <person name="Doglio A."/>
            <person name="Gutierrez J.M."/>
            <person name="Lazdunski M."/>
            <person name="Gelb M.H."/>
            <person name="Lambeau G."/>
        </authorList>
    </citation>
    <scope>FUNCTION</scope>
    <scope>TOXIC DOSE</scope>
    <scope>MUTAGENESIS OF GLY-57; HIS-75 AND ASP-76</scope>
</reference>
<organism>
    <name type="scientific">Oxyuranus scutellatus scutellatus</name>
    <name type="common">Australian taipan</name>
    <name type="synonym">Coastal taipan</name>
    <dbReference type="NCBI Taxonomy" id="8667"/>
    <lineage>
        <taxon>Eukaryota</taxon>
        <taxon>Metazoa</taxon>
        <taxon>Chordata</taxon>
        <taxon>Craniata</taxon>
        <taxon>Vertebrata</taxon>
        <taxon>Euteleostomi</taxon>
        <taxon>Lepidosauria</taxon>
        <taxon>Squamata</taxon>
        <taxon>Bifurcata</taxon>
        <taxon>Unidentata</taxon>
        <taxon>Episquamata</taxon>
        <taxon>Toxicofera</taxon>
        <taxon>Serpentes</taxon>
        <taxon>Colubroidea</taxon>
        <taxon>Elapidae</taxon>
        <taxon>Hydrophiinae</taxon>
        <taxon>Oxyuranus</taxon>
    </lineage>
</organism>
<comment type="function">
    <text evidence="5 6 7 8 9 10">Snake venom phospholipase A2 (PLA2) that shows high presynaptic neurotoxicity in vertebrata that is independent of catalytic activity (PubMed:2544597, PubMed:10548416, PubMed:16669624), as well as local myotoxicity when intramuscularly injected into mice (PubMed:16669624). Blocks acetylcholine release in Aplysia neurons (PubMed:8583413), and potentiates pro-inflammatory cellular signaling (PubMed:12782627). Potentiates glutamate excitoxicity when coinjected into brain of rats (PubMed:10548416). May act by binding in a calcium-dependent fashion and with high affinity to a neuronal-type (N-type) PLA2 receptor, and with very high affinity to a muscle-type (M-type) PLA2 receptor. In vitro, shows a high-specific activity on E.coli membranes and is more efficient on the anionic phospholipid POPG than on the anionic phospholipid POPS or the zwitterionic phospholipid POPC. Exerts catalytically-independent anti-HIV (IC(50) is 35 nM) activity and catalytically-dependent antimalarial activity (IC(50) is 3.1 nM when tested on P.falciparum grown in serum that contains lipoproteins). PLA2 catalyzes the calcium-dependent hydrolysis of the 2-acyl groups in 3-sn-phosphoglycerides.</text>
</comment>
<comment type="catalytic activity">
    <reaction evidence="3 4">
        <text>a 1,2-diacyl-sn-glycero-3-phosphocholine + H2O = a 1-acyl-sn-glycero-3-phosphocholine + a fatty acid + H(+)</text>
        <dbReference type="Rhea" id="RHEA:15801"/>
        <dbReference type="ChEBI" id="CHEBI:15377"/>
        <dbReference type="ChEBI" id="CHEBI:15378"/>
        <dbReference type="ChEBI" id="CHEBI:28868"/>
        <dbReference type="ChEBI" id="CHEBI:57643"/>
        <dbReference type="ChEBI" id="CHEBI:58168"/>
        <dbReference type="EC" id="3.1.1.4"/>
    </reaction>
</comment>
<comment type="cofactor">
    <cofactor evidence="1">
        <name>Ca(2+)</name>
        <dbReference type="ChEBI" id="CHEBI:29108"/>
    </cofactor>
    <text evidence="1">Binds 1 Ca(2+) ion.</text>
</comment>
<comment type="subunit">
    <text evidence="8">Monomer.</text>
</comment>
<comment type="subcellular location">
    <subcellularLocation>
        <location>Secreted</location>
    </subcellularLocation>
</comment>
<comment type="tissue specificity">
    <text>Expressed by the venom gland.</text>
</comment>
<comment type="toxic dose">
    <text evidence="7">LD(100) is 2 ug/kg by intracerebroventricular injection into mice.</text>
</comment>
<comment type="similarity">
    <text evidence="11">Belongs to the phospholipase A2 family. Group I subfamily. D49 sub-subfamily.</text>
</comment>
<feature type="signal peptide" evidence="2">
    <location>
        <begin position="1"/>
        <end position="27"/>
    </location>
</feature>
<feature type="chain" id="PRO_5000140344" description="Phospholipase A2 OS2">
    <location>
        <begin position="28"/>
        <end position="146"/>
    </location>
</feature>
<feature type="active site" evidence="1">
    <location>
        <position position="75"/>
    </location>
</feature>
<feature type="active site" evidence="1">
    <location>
        <position position="120"/>
    </location>
</feature>
<feature type="binding site" evidence="1">
    <location>
        <position position="55"/>
    </location>
    <ligand>
        <name>Ca(2+)</name>
        <dbReference type="ChEBI" id="CHEBI:29108"/>
    </ligand>
</feature>
<feature type="binding site" evidence="1">
    <location>
        <position position="57"/>
    </location>
    <ligand>
        <name>Ca(2+)</name>
        <dbReference type="ChEBI" id="CHEBI:29108"/>
    </ligand>
</feature>
<feature type="binding site" evidence="1">
    <location>
        <position position="59"/>
    </location>
    <ligand>
        <name>Ca(2+)</name>
        <dbReference type="ChEBI" id="CHEBI:29108"/>
    </ligand>
</feature>
<feature type="binding site" evidence="1">
    <location>
        <position position="76"/>
    </location>
    <ligand>
        <name>Ca(2+)</name>
        <dbReference type="ChEBI" id="CHEBI:29108"/>
    </ligand>
</feature>
<feature type="disulfide bond" evidence="1">
    <location>
        <begin position="38"/>
        <end position="99"/>
    </location>
</feature>
<feature type="disulfide bond" evidence="1">
    <location>
        <begin position="54"/>
        <end position="145"/>
    </location>
</feature>
<feature type="disulfide bond" evidence="1">
    <location>
        <begin position="56"/>
        <end position="72"/>
    </location>
</feature>
<feature type="disulfide bond" evidence="1">
    <location>
        <begin position="71"/>
        <end position="126"/>
    </location>
</feature>
<feature type="disulfide bond" evidence="1">
    <location>
        <begin position="78"/>
        <end position="119"/>
    </location>
</feature>
<feature type="disulfide bond" evidence="1">
    <location>
        <begin position="88"/>
        <end position="112"/>
    </location>
</feature>
<feature type="disulfide bond" evidence="1">
    <location>
        <begin position="106"/>
        <end position="117"/>
    </location>
</feature>
<feature type="mutagenesis site" description="Large decrease in neurotoxicity, 500-fold decrease in catalytic activity, no change in binding affinity to M-type receptors, 20'000-fold decrease in binding affinity to N-type receptors." evidence="7">
    <original>G</original>
    <variation>S</variation>
    <location>
        <position position="57"/>
    </location>
</feature>
<feature type="mutagenesis site" description="Almost no decrease in neurotoxicity, myotoxicity, nor in catalytic activity, no change in binding affinity to M-type receptors, no important decrease in binding affinity to N-type receptors; when associated with L-58.">
    <original>K</original>
    <variation>L</variation>
    <location>
        <position position="58"/>
    </location>
</feature>
<feature type="mutagenesis site" description="Almost no decrease in neurotoxicity, myotoxicity, nor in catalytic activity, no change in binding affinity to M-type receptors, no important decrease in binding affinity to N-type receptors; when associated with L-58.">
    <original>R</original>
    <variation>S</variation>
    <location>
        <position position="61"/>
    </location>
</feature>
<feature type="mutagenesis site" description="16-fold decrease in neurotoxicity, 500-fold decrease in catalytic activity, no change in binding affinity to M-type receptors, 50-fold decrease in binding affinity to N-type receptors." evidence="7">
    <original>H</original>
    <variation>Q</variation>
    <location>
        <position position="75"/>
    </location>
</feature>
<feature type="mutagenesis site" description="Complete loss of neurotoxicity and catalytic activity, no change in binding affinity to M-type receptors, 1230-fold decrease in binding affinity to N-type receptors." evidence="7">
    <original>D</original>
    <variation>K</variation>
    <location>
        <position position="76"/>
    </location>
</feature>
<feature type="sequence conflict" description="In Ref. 1; AAZ22637." evidence="11" ref="1">
    <original>R</original>
    <variation>S</variation>
    <location>
        <position position="61"/>
    </location>
</feature>